<evidence type="ECO:0000255" key="1">
    <source>
        <dbReference type="HAMAP-Rule" id="MF_00817"/>
    </source>
</evidence>
<dbReference type="EC" id="1.7.1.13" evidence="1"/>
<dbReference type="EMBL" id="CP000886">
    <property type="protein sequence ID" value="ABX69028.1"/>
    <property type="molecule type" value="Genomic_DNA"/>
</dbReference>
<dbReference type="RefSeq" id="WP_000100464.1">
    <property type="nucleotide sequence ID" value="NC_010102.1"/>
</dbReference>
<dbReference type="SMR" id="A9N2H7"/>
<dbReference type="KEGG" id="spq:SPAB_03690"/>
<dbReference type="PATRIC" id="fig|1016998.12.peg.3477"/>
<dbReference type="HOGENOM" id="CLU_054738_0_0_6"/>
<dbReference type="BioCyc" id="SENT1016998:SPAB_RS15035-MONOMER"/>
<dbReference type="UniPathway" id="UPA00392"/>
<dbReference type="Proteomes" id="UP000008556">
    <property type="component" value="Chromosome"/>
</dbReference>
<dbReference type="GO" id="GO:0005737">
    <property type="term" value="C:cytoplasm"/>
    <property type="evidence" value="ECO:0007669"/>
    <property type="project" value="UniProtKB-SubCell"/>
</dbReference>
<dbReference type="GO" id="GO:0033739">
    <property type="term" value="F:preQ1 synthase activity"/>
    <property type="evidence" value="ECO:0007669"/>
    <property type="project" value="UniProtKB-UniRule"/>
</dbReference>
<dbReference type="GO" id="GO:0008616">
    <property type="term" value="P:queuosine biosynthetic process"/>
    <property type="evidence" value="ECO:0007669"/>
    <property type="project" value="UniProtKB-UniRule"/>
</dbReference>
<dbReference type="GO" id="GO:0006400">
    <property type="term" value="P:tRNA modification"/>
    <property type="evidence" value="ECO:0007669"/>
    <property type="project" value="UniProtKB-UniRule"/>
</dbReference>
<dbReference type="FunFam" id="3.30.1130.10:FF:000004">
    <property type="entry name" value="NADPH-dependent 7-cyano-7-deazaguanine reductase"/>
    <property type="match status" value="1"/>
</dbReference>
<dbReference type="Gene3D" id="3.30.1130.10">
    <property type="match status" value="2"/>
</dbReference>
<dbReference type="HAMAP" id="MF_00817">
    <property type="entry name" value="QueF_type2"/>
    <property type="match status" value="1"/>
</dbReference>
<dbReference type="InterPro" id="IPR043133">
    <property type="entry name" value="GTP-CH-I_C/QueF"/>
</dbReference>
<dbReference type="InterPro" id="IPR050084">
    <property type="entry name" value="NADPH_dep_7-cyano-7-deazaG_red"/>
</dbReference>
<dbReference type="InterPro" id="IPR029500">
    <property type="entry name" value="QueF"/>
</dbReference>
<dbReference type="InterPro" id="IPR029139">
    <property type="entry name" value="QueF_N"/>
</dbReference>
<dbReference type="InterPro" id="IPR016428">
    <property type="entry name" value="QueF_type2"/>
</dbReference>
<dbReference type="NCBIfam" id="TIGR03138">
    <property type="entry name" value="QueF"/>
    <property type="match status" value="1"/>
</dbReference>
<dbReference type="PANTHER" id="PTHR34354">
    <property type="entry name" value="NADPH-DEPENDENT 7-CYANO-7-DEAZAGUANINE REDUCTASE"/>
    <property type="match status" value="1"/>
</dbReference>
<dbReference type="PANTHER" id="PTHR34354:SF1">
    <property type="entry name" value="NADPH-DEPENDENT 7-CYANO-7-DEAZAGUANINE REDUCTASE"/>
    <property type="match status" value="1"/>
</dbReference>
<dbReference type="Pfam" id="PF14489">
    <property type="entry name" value="QueF"/>
    <property type="match status" value="1"/>
</dbReference>
<dbReference type="Pfam" id="PF14819">
    <property type="entry name" value="QueF_N"/>
    <property type="match status" value="1"/>
</dbReference>
<dbReference type="PIRSF" id="PIRSF004750">
    <property type="entry name" value="Nitrile_oxidored_YqcD_prd"/>
    <property type="match status" value="1"/>
</dbReference>
<dbReference type="SUPFAM" id="SSF55620">
    <property type="entry name" value="Tetrahydrobiopterin biosynthesis enzymes-like"/>
    <property type="match status" value="1"/>
</dbReference>
<reference key="1">
    <citation type="submission" date="2007-11" db="EMBL/GenBank/DDBJ databases">
        <authorList>
            <consortium name="The Salmonella enterica serovar Paratyphi B Genome Sequencing Project"/>
            <person name="McClelland M."/>
            <person name="Sanderson E.K."/>
            <person name="Porwollik S."/>
            <person name="Spieth J."/>
            <person name="Clifton W.S."/>
            <person name="Fulton R."/>
            <person name="Cordes M."/>
            <person name="Wollam A."/>
            <person name="Shah N."/>
            <person name="Pepin K."/>
            <person name="Bhonagiri V."/>
            <person name="Nash W."/>
            <person name="Johnson M."/>
            <person name="Thiruvilangam P."/>
            <person name="Wilson R."/>
        </authorList>
    </citation>
    <scope>NUCLEOTIDE SEQUENCE [LARGE SCALE GENOMIC DNA]</scope>
    <source>
        <strain>ATCC BAA-1250 / SPB7</strain>
    </source>
</reference>
<comment type="function">
    <text evidence="1">Catalyzes the NADPH-dependent reduction of 7-cyano-7-deazaguanine (preQ0) to 7-aminomethyl-7-deazaguanine (preQ1).</text>
</comment>
<comment type="catalytic activity">
    <reaction evidence="1">
        <text>7-aminomethyl-7-carbaguanine + 2 NADP(+) = 7-cyano-7-deazaguanine + 2 NADPH + 3 H(+)</text>
        <dbReference type="Rhea" id="RHEA:13409"/>
        <dbReference type="ChEBI" id="CHEBI:15378"/>
        <dbReference type="ChEBI" id="CHEBI:45075"/>
        <dbReference type="ChEBI" id="CHEBI:57783"/>
        <dbReference type="ChEBI" id="CHEBI:58349"/>
        <dbReference type="ChEBI" id="CHEBI:58703"/>
        <dbReference type="EC" id="1.7.1.13"/>
    </reaction>
</comment>
<comment type="pathway">
    <text evidence="1">tRNA modification; tRNA-queuosine biosynthesis.</text>
</comment>
<comment type="subunit">
    <text evidence="1">Homodimer.</text>
</comment>
<comment type="subcellular location">
    <subcellularLocation>
        <location evidence="1">Cytoplasm</location>
    </subcellularLocation>
</comment>
<comment type="similarity">
    <text evidence="1">Belongs to the GTP cyclohydrolase I family. QueF type 2 subfamily.</text>
</comment>
<protein>
    <recommendedName>
        <fullName evidence="1">NADPH-dependent 7-cyano-7-deazaguanine reductase</fullName>
        <ecNumber evidence="1">1.7.1.13</ecNumber>
    </recommendedName>
    <alternativeName>
        <fullName evidence="1">7-cyano-7-carbaguanine reductase</fullName>
    </alternativeName>
    <alternativeName>
        <fullName evidence="1">NADPH-dependent nitrile oxidoreductase</fullName>
    </alternativeName>
    <alternativeName>
        <fullName evidence="1">PreQ(0) reductase</fullName>
    </alternativeName>
</protein>
<gene>
    <name evidence="1" type="primary">queF</name>
    <name type="ordered locus">SPAB_03690</name>
</gene>
<accession>A9N2H7</accession>
<name>QUEF_SALPB</name>
<feature type="chain" id="PRO_1000083831" description="NADPH-dependent 7-cyano-7-deazaguanine reductase">
    <location>
        <begin position="1"/>
        <end position="282"/>
    </location>
</feature>
<feature type="active site" description="Thioimide intermediate" evidence="1">
    <location>
        <position position="190"/>
    </location>
</feature>
<feature type="active site" description="Proton donor" evidence="1">
    <location>
        <position position="197"/>
    </location>
</feature>
<feature type="binding site" evidence="1">
    <location>
        <begin position="88"/>
        <end position="90"/>
    </location>
    <ligand>
        <name>substrate</name>
    </ligand>
</feature>
<feature type="binding site" evidence="1">
    <location>
        <begin position="90"/>
        <end position="91"/>
    </location>
    <ligand>
        <name>NADPH</name>
        <dbReference type="ChEBI" id="CHEBI:57783"/>
    </ligand>
</feature>
<feature type="binding site" evidence="1">
    <location>
        <begin position="229"/>
        <end position="230"/>
    </location>
    <ligand>
        <name>substrate</name>
    </ligand>
</feature>
<feature type="binding site" evidence="1">
    <location>
        <begin position="258"/>
        <end position="259"/>
    </location>
    <ligand>
        <name>NADPH</name>
        <dbReference type="ChEBI" id="CHEBI:57783"/>
    </ligand>
</feature>
<proteinExistence type="inferred from homology"/>
<organism>
    <name type="scientific">Salmonella paratyphi B (strain ATCC BAA-1250 / SPB7)</name>
    <dbReference type="NCBI Taxonomy" id="1016998"/>
    <lineage>
        <taxon>Bacteria</taxon>
        <taxon>Pseudomonadati</taxon>
        <taxon>Pseudomonadota</taxon>
        <taxon>Gammaproteobacteria</taxon>
        <taxon>Enterobacterales</taxon>
        <taxon>Enterobacteriaceae</taxon>
        <taxon>Salmonella</taxon>
    </lineage>
</organism>
<sequence>MSSYENHQALDGLTLGKSTDYRDNYDASLLQGVPRSLNRDPLGLTADNLPFHGADIWTLYELSWLNSQGLPQVAVGHVELDYTSVNLIESKSFKLYLNSFNQTRFDTWETVRQTLERDLRACAQGSVSVRLHRLDELEGQPVAHFHGTCIDDQDISIDNYQFTTDYLQHAVSGEKQVEETLVSHLLKSNCLITHQPDWGSIQIQYRGRKIDREKLLRYLVSFRHHNEFHEQCVERIFNDILRFCQPETLSVYARYTRRGGLDINPWRSNTDFVPATGRLARQ</sequence>
<keyword id="KW-0963">Cytoplasm</keyword>
<keyword id="KW-0521">NADP</keyword>
<keyword id="KW-0560">Oxidoreductase</keyword>
<keyword id="KW-0671">Queuosine biosynthesis</keyword>